<gene>
    <name evidence="7" type="primary">Erlin1</name>
    <name type="synonym">Keo4</name>
    <name evidence="2" type="synonym">Spfh1</name>
</gene>
<proteinExistence type="evidence at protein level"/>
<protein>
    <recommendedName>
        <fullName evidence="2">Erlin-1</fullName>
    </recommendedName>
    <alternativeName>
        <fullName>Endoplasmic reticulum lipid raft-associated protein 1</fullName>
    </alternativeName>
    <alternativeName>
        <fullName evidence="6">Protein KE04 homolog</fullName>
    </alternativeName>
    <alternativeName>
        <fullName>Stomatin-prohibitin-flotillin-HflC/K domain-containing protein 1</fullName>
        <shortName>SPFH domain-containing protein 1</shortName>
    </alternativeName>
</protein>
<feature type="chain" id="PRO_0000002785" description="Erlin-1">
    <location>
        <begin position="1"/>
        <end position="348"/>
    </location>
</feature>
<feature type="topological domain" description="Cytoplasmic" evidence="3">
    <location>
        <begin position="1"/>
        <end position="7"/>
    </location>
</feature>
<feature type="transmembrane region" description="Helical" evidence="3">
    <location>
        <begin position="8"/>
        <end position="28"/>
    </location>
</feature>
<feature type="topological domain" description="Lumenal" evidence="3">
    <location>
        <begin position="29"/>
        <end position="348"/>
    </location>
</feature>
<feature type="region of interest" description="Disordered" evidence="4">
    <location>
        <begin position="318"/>
        <end position="348"/>
    </location>
</feature>
<feature type="compositionally biased region" description="Basic and acidic residues" evidence="4">
    <location>
        <begin position="318"/>
        <end position="336"/>
    </location>
</feature>
<feature type="compositionally biased region" description="Polar residues" evidence="4">
    <location>
        <begin position="339"/>
        <end position="348"/>
    </location>
</feature>
<feature type="modified residue" description="N6-acetyllysine" evidence="2">
    <location>
        <position position="269"/>
    </location>
</feature>
<feature type="glycosylation site" description="N-linked (GlcNAc...) asparagine" evidence="3">
    <location>
        <position position="108"/>
    </location>
</feature>
<feature type="sequence conflict" description="In Ref. 4; AAH23849." evidence="6" ref="4">
    <original>F</original>
    <variation>S</variation>
    <location>
        <position position="57"/>
    </location>
</feature>
<sequence>MNMTQARLLVAAVVGLVAILLYASIHKIEEGHLAVYYRGGALLTSPSGPGYHIMLPFITTFRSVQTTLQTDEVKNVPCGTSGGVMIYIDRIEVVNMLAPYAVFDIVRNYTADYDKTLIFNKIHHELNQFCSAHTLQEVYIELFDQIDENLKQALQKDLNTMAPGLTIQAVRVTKPKIPEAIRRNFELMEAEKTKLLIAAQKQKVVEKEAETERKRAVIEAEKIAQVAKIRFQQKVMEKETEKRISEIEDAAFLAREKAKADAEYYAAHKYATSNKHKLTPEYLELKKYQAIASNSKIYFGSNIPSMFVDSSCALKYSDGRTGREDSLPPEEAREPSGESPIQNKENAG</sequence>
<accession>Q91X78</accession>
<accession>A0A0R4J1G5</accession>
<accession>Q3UKI9</accession>
<accession>Q8CIH7</accession>
<reference key="1">
    <citation type="journal article" date="2005" name="Science">
        <title>The transcriptional landscape of the mammalian genome.</title>
        <authorList>
            <person name="Carninci P."/>
            <person name="Kasukawa T."/>
            <person name="Katayama S."/>
            <person name="Gough J."/>
            <person name="Frith M.C."/>
            <person name="Maeda N."/>
            <person name="Oyama R."/>
            <person name="Ravasi T."/>
            <person name="Lenhard B."/>
            <person name="Wells C."/>
            <person name="Kodzius R."/>
            <person name="Shimokawa K."/>
            <person name="Bajic V.B."/>
            <person name="Brenner S.E."/>
            <person name="Batalov S."/>
            <person name="Forrest A.R."/>
            <person name="Zavolan M."/>
            <person name="Davis M.J."/>
            <person name="Wilming L.G."/>
            <person name="Aidinis V."/>
            <person name="Allen J.E."/>
            <person name="Ambesi-Impiombato A."/>
            <person name="Apweiler R."/>
            <person name="Aturaliya R.N."/>
            <person name="Bailey T.L."/>
            <person name="Bansal M."/>
            <person name="Baxter L."/>
            <person name="Beisel K.W."/>
            <person name="Bersano T."/>
            <person name="Bono H."/>
            <person name="Chalk A.M."/>
            <person name="Chiu K.P."/>
            <person name="Choudhary V."/>
            <person name="Christoffels A."/>
            <person name="Clutterbuck D.R."/>
            <person name="Crowe M.L."/>
            <person name="Dalla E."/>
            <person name="Dalrymple B.P."/>
            <person name="de Bono B."/>
            <person name="Della Gatta G."/>
            <person name="di Bernardo D."/>
            <person name="Down T."/>
            <person name="Engstrom P."/>
            <person name="Fagiolini M."/>
            <person name="Faulkner G."/>
            <person name="Fletcher C.F."/>
            <person name="Fukushima T."/>
            <person name="Furuno M."/>
            <person name="Futaki S."/>
            <person name="Gariboldi M."/>
            <person name="Georgii-Hemming P."/>
            <person name="Gingeras T.R."/>
            <person name="Gojobori T."/>
            <person name="Green R.E."/>
            <person name="Gustincich S."/>
            <person name="Harbers M."/>
            <person name="Hayashi Y."/>
            <person name="Hensch T.K."/>
            <person name="Hirokawa N."/>
            <person name="Hill D."/>
            <person name="Huminiecki L."/>
            <person name="Iacono M."/>
            <person name="Ikeo K."/>
            <person name="Iwama A."/>
            <person name="Ishikawa T."/>
            <person name="Jakt M."/>
            <person name="Kanapin A."/>
            <person name="Katoh M."/>
            <person name="Kawasawa Y."/>
            <person name="Kelso J."/>
            <person name="Kitamura H."/>
            <person name="Kitano H."/>
            <person name="Kollias G."/>
            <person name="Krishnan S.P."/>
            <person name="Kruger A."/>
            <person name="Kummerfeld S.K."/>
            <person name="Kurochkin I.V."/>
            <person name="Lareau L.F."/>
            <person name="Lazarevic D."/>
            <person name="Lipovich L."/>
            <person name="Liu J."/>
            <person name="Liuni S."/>
            <person name="McWilliam S."/>
            <person name="Madan Babu M."/>
            <person name="Madera M."/>
            <person name="Marchionni L."/>
            <person name="Matsuda H."/>
            <person name="Matsuzawa S."/>
            <person name="Miki H."/>
            <person name="Mignone F."/>
            <person name="Miyake S."/>
            <person name="Morris K."/>
            <person name="Mottagui-Tabar S."/>
            <person name="Mulder N."/>
            <person name="Nakano N."/>
            <person name="Nakauchi H."/>
            <person name="Ng P."/>
            <person name="Nilsson R."/>
            <person name="Nishiguchi S."/>
            <person name="Nishikawa S."/>
            <person name="Nori F."/>
            <person name="Ohara O."/>
            <person name="Okazaki Y."/>
            <person name="Orlando V."/>
            <person name="Pang K.C."/>
            <person name="Pavan W.J."/>
            <person name="Pavesi G."/>
            <person name="Pesole G."/>
            <person name="Petrovsky N."/>
            <person name="Piazza S."/>
            <person name="Reed J."/>
            <person name="Reid J.F."/>
            <person name="Ring B.Z."/>
            <person name="Ringwald M."/>
            <person name="Rost B."/>
            <person name="Ruan Y."/>
            <person name="Salzberg S.L."/>
            <person name="Sandelin A."/>
            <person name="Schneider C."/>
            <person name="Schoenbach C."/>
            <person name="Sekiguchi K."/>
            <person name="Semple C.A."/>
            <person name="Seno S."/>
            <person name="Sessa L."/>
            <person name="Sheng Y."/>
            <person name="Shibata Y."/>
            <person name="Shimada H."/>
            <person name="Shimada K."/>
            <person name="Silva D."/>
            <person name="Sinclair B."/>
            <person name="Sperling S."/>
            <person name="Stupka E."/>
            <person name="Sugiura K."/>
            <person name="Sultana R."/>
            <person name="Takenaka Y."/>
            <person name="Taki K."/>
            <person name="Tammoja K."/>
            <person name="Tan S.L."/>
            <person name="Tang S."/>
            <person name="Taylor M.S."/>
            <person name="Tegner J."/>
            <person name="Teichmann S.A."/>
            <person name="Ueda H.R."/>
            <person name="van Nimwegen E."/>
            <person name="Verardo R."/>
            <person name="Wei C.L."/>
            <person name="Yagi K."/>
            <person name="Yamanishi H."/>
            <person name="Zabarovsky E."/>
            <person name="Zhu S."/>
            <person name="Zimmer A."/>
            <person name="Hide W."/>
            <person name="Bult C."/>
            <person name="Grimmond S.M."/>
            <person name="Teasdale R.D."/>
            <person name="Liu E.T."/>
            <person name="Brusic V."/>
            <person name="Quackenbush J."/>
            <person name="Wahlestedt C."/>
            <person name="Mattick J.S."/>
            <person name="Hume D.A."/>
            <person name="Kai C."/>
            <person name="Sasaki D."/>
            <person name="Tomaru Y."/>
            <person name="Fukuda S."/>
            <person name="Kanamori-Katayama M."/>
            <person name="Suzuki M."/>
            <person name="Aoki J."/>
            <person name="Arakawa T."/>
            <person name="Iida J."/>
            <person name="Imamura K."/>
            <person name="Itoh M."/>
            <person name="Kato T."/>
            <person name="Kawaji H."/>
            <person name="Kawagashira N."/>
            <person name="Kawashima T."/>
            <person name="Kojima M."/>
            <person name="Kondo S."/>
            <person name="Konno H."/>
            <person name="Nakano K."/>
            <person name="Ninomiya N."/>
            <person name="Nishio T."/>
            <person name="Okada M."/>
            <person name="Plessy C."/>
            <person name="Shibata K."/>
            <person name="Shiraki T."/>
            <person name="Suzuki S."/>
            <person name="Tagami M."/>
            <person name="Waki K."/>
            <person name="Watahiki A."/>
            <person name="Okamura-Oho Y."/>
            <person name="Suzuki H."/>
            <person name="Kawai J."/>
            <person name="Hayashizaki Y."/>
        </authorList>
    </citation>
    <scope>NUCLEOTIDE SEQUENCE [LARGE SCALE MRNA]</scope>
    <source>
        <strain>C57BL/6J</strain>
        <tissue>Pituitary</tissue>
        <tissue>Placenta</tissue>
    </source>
</reference>
<reference key="2">
    <citation type="journal article" date="2009" name="PLoS Biol.">
        <title>Lineage-specific biology revealed by a finished genome assembly of the mouse.</title>
        <authorList>
            <person name="Church D.M."/>
            <person name="Goodstadt L."/>
            <person name="Hillier L.W."/>
            <person name="Zody M.C."/>
            <person name="Goldstein S."/>
            <person name="She X."/>
            <person name="Bult C.J."/>
            <person name="Agarwala R."/>
            <person name="Cherry J.L."/>
            <person name="DiCuccio M."/>
            <person name="Hlavina W."/>
            <person name="Kapustin Y."/>
            <person name="Meric P."/>
            <person name="Maglott D."/>
            <person name="Birtle Z."/>
            <person name="Marques A.C."/>
            <person name="Graves T."/>
            <person name="Zhou S."/>
            <person name="Teague B."/>
            <person name="Potamousis K."/>
            <person name="Churas C."/>
            <person name="Place M."/>
            <person name="Herschleb J."/>
            <person name="Runnheim R."/>
            <person name="Forrest D."/>
            <person name="Amos-Landgraf J."/>
            <person name="Schwartz D.C."/>
            <person name="Cheng Z."/>
            <person name="Lindblad-Toh K."/>
            <person name="Eichler E.E."/>
            <person name="Ponting C.P."/>
        </authorList>
    </citation>
    <scope>NUCLEOTIDE SEQUENCE [LARGE SCALE GENOMIC DNA]</scope>
    <source>
        <strain>C57BL/6J</strain>
    </source>
</reference>
<reference key="3">
    <citation type="submission" date="2005-07" db="EMBL/GenBank/DDBJ databases">
        <authorList>
            <person name="Mural R.J."/>
            <person name="Adams M.D."/>
            <person name="Myers E.W."/>
            <person name="Smith H.O."/>
            <person name="Venter J.C."/>
        </authorList>
    </citation>
    <scope>NUCLEOTIDE SEQUENCE [LARGE SCALE GENOMIC DNA]</scope>
</reference>
<reference key="4">
    <citation type="journal article" date="2004" name="Genome Res.">
        <title>The status, quality, and expansion of the NIH full-length cDNA project: the Mammalian Gene Collection (MGC).</title>
        <authorList>
            <consortium name="The MGC Project Team"/>
        </authorList>
    </citation>
    <scope>NUCLEOTIDE SEQUENCE [LARGE SCALE MRNA]</scope>
    <source>
        <strain>FVB/N</strain>
        <tissue>Colon</tissue>
        <tissue>Mammary gland</tissue>
    </source>
</reference>
<reference key="5">
    <citation type="journal article" date="2010" name="Cell">
        <title>A tissue-specific atlas of mouse protein phosphorylation and expression.</title>
        <authorList>
            <person name="Huttlin E.L."/>
            <person name="Jedrychowski M.P."/>
            <person name="Elias J.E."/>
            <person name="Goswami T."/>
            <person name="Rad R."/>
            <person name="Beausoleil S.A."/>
            <person name="Villen J."/>
            <person name="Haas W."/>
            <person name="Sowa M.E."/>
            <person name="Gygi S.P."/>
        </authorList>
    </citation>
    <scope>IDENTIFICATION BY MASS SPECTROMETRY [LARGE SCALE ANALYSIS]</scope>
    <source>
        <tissue>Kidney</tissue>
        <tissue>Lung</tissue>
        <tissue>Spleen</tissue>
        <tissue>Testis</tissue>
    </source>
</reference>
<reference key="6">
    <citation type="journal article" date="2011" name="J. Biol. Chem.">
        <title>RNF170 protein, an endoplasmic reticulum membrane ubiquitin ligase, mediates inositol 1,4,5-trisphosphate receptor ubiquitination and degradation.</title>
        <authorList>
            <person name="Lu J.P."/>
            <person name="Wang Y."/>
            <person name="Sliter D.A."/>
            <person name="Pearce M.M."/>
            <person name="Wojcikiewicz R.J."/>
        </authorList>
    </citation>
    <scope>INTERACTION WITH RNF170</scope>
</reference>
<organism>
    <name type="scientific">Mus musculus</name>
    <name type="common">Mouse</name>
    <dbReference type="NCBI Taxonomy" id="10090"/>
    <lineage>
        <taxon>Eukaryota</taxon>
        <taxon>Metazoa</taxon>
        <taxon>Chordata</taxon>
        <taxon>Craniata</taxon>
        <taxon>Vertebrata</taxon>
        <taxon>Euteleostomi</taxon>
        <taxon>Mammalia</taxon>
        <taxon>Eutheria</taxon>
        <taxon>Euarchontoglires</taxon>
        <taxon>Glires</taxon>
        <taxon>Rodentia</taxon>
        <taxon>Myomorpha</taxon>
        <taxon>Muroidea</taxon>
        <taxon>Muridae</taxon>
        <taxon>Murinae</taxon>
        <taxon>Mus</taxon>
        <taxon>Mus</taxon>
    </lineage>
</organism>
<comment type="function">
    <text evidence="2">Component of the ERLIN1/ERLIN2 complex which mediates the endoplasmic reticulum-associated degradation (ERAD) of inositol 1,4,5-trisphosphate receptors (IP3Rs). Involved in regulation of cellular cholesterol homeostasis by regulation the SREBP signaling pathway. Binds cholesterol and may promote ER retention of the SCAP-SREBF complex (By similarity).</text>
</comment>
<comment type="subunit">
    <text evidence="2 5">Forms a heteromeric complex with ERLIN2 (By similarity). In complex with ERLIN2, interacts with RNF170 (PubMed:21610068). Interacts with AMFR and SYVN1 (By similarity).</text>
</comment>
<comment type="subcellular location">
    <subcellularLocation>
        <location evidence="1">Endoplasmic reticulum membrane</location>
        <topology evidence="1">Single-pass type II membrane protein</topology>
    </subcellularLocation>
    <text evidence="1">Associated with lipid raft-like domains of the endoplasmic reticulum membrane.</text>
</comment>
<comment type="PTM">
    <text evidence="2">Deubiquitinated by USP25; leading to stabilization.</text>
</comment>
<comment type="similarity">
    <text evidence="6">Belongs to the band 7/mec-2 family.</text>
</comment>
<comment type="sequence caution" evidence="6">
    <conflict type="erroneous initiation">
        <sequence resource="EMBL-CDS" id="AAH11220"/>
    </conflict>
    <text>Truncated N-terminus.</text>
</comment>
<comment type="sequence caution" evidence="6">
    <conflict type="erroneous initiation">
        <sequence resource="EMBL-CDS" id="AAH23849"/>
    </conflict>
    <text>Truncated N-terminus.</text>
</comment>
<dbReference type="EMBL" id="AK133557">
    <property type="protein sequence ID" value="BAE21724.1"/>
    <property type="molecule type" value="mRNA"/>
</dbReference>
<dbReference type="EMBL" id="AK145990">
    <property type="protein sequence ID" value="BAE26812.1"/>
    <property type="molecule type" value="mRNA"/>
</dbReference>
<dbReference type="EMBL" id="AC124693">
    <property type="status" value="NOT_ANNOTATED_CDS"/>
    <property type="molecule type" value="Genomic_DNA"/>
</dbReference>
<dbReference type="EMBL" id="CH466534">
    <property type="protein sequence ID" value="EDL41918.1"/>
    <property type="molecule type" value="Genomic_DNA"/>
</dbReference>
<dbReference type="EMBL" id="BC011220">
    <property type="protein sequence ID" value="AAH11220.1"/>
    <property type="status" value="ALT_INIT"/>
    <property type="molecule type" value="mRNA"/>
</dbReference>
<dbReference type="EMBL" id="BC023849">
    <property type="protein sequence ID" value="AAH23849.1"/>
    <property type="status" value="ALT_INIT"/>
    <property type="molecule type" value="mRNA"/>
</dbReference>
<dbReference type="CCDS" id="CCDS29842.2"/>
<dbReference type="RefSeq" id="NP_001157831.1">
    <property type="nucleotide sequence ID" value="NM_001164359.1"/>
</dbReference>
<dbReference type="RefSeq" id="NP_001157832.1">
    <property type="nucleotide sequence ID" value="NM_001164360.1"/>
</dbReference>
<dbReference type="RefSeq" id="NP_663477.3">
    <property type="nucleotide sequence ID" value="NM_145502.3"/>
</dbReference>
<dbReference type="RefSeq" id="XP_006527061.1">
    <property type="nucleotide sequence ID" value="XM_006526998.5"/>
</dbReference>
<dbReference type="SMR" id="Q91X78"/>
<dbReference type="BioGRID" id="230480">
    <property type="interactions" value="5"/>
</dbReference>
<dbReference type="FunCoup" id="Q91X78">
    <property type="interactions" value="1039"/>
</dbReference>
<dbReference type="IntAct" id="Q91X78">
    <property type="interactions" value="2"/>
</dbReference>
<dbReference type="STRING" id="10090.ENSMUSP00000071618"/>
<dbReference type="GlyConnect" id="2300">
    <property type="glycosylation" value="1 N-Linked glycan (1 site)"/>
</dbReference>
<dbReference type="GlyCosmos" id="Q91X78">
    <property type="glycosylation" value="1 site, 1 glycan"/>
</dbReference>
<dbReference type="GlyGen" id="Q91X78">
    <property type="glycosylation" value="3 sites, 3 N-linked glycans (2 sites), 1 O-linked glycan (1 site)"/>
</dbReference>
<dbReference type="iPTMnet" id="Q91X78"/>
<dbReference type="PhosphoSitePlus" id="Q91X78"/>
<dbReference type="SwissPalm" id="Q91X78"/>
<dbReference type="jPOST" id="Q91X78"/>
<dbReference type="PaxDb" id="10090-ENSMUSP00000129684"/>
<dbReference type="PeptideAtlas" id="Q91X78"/>
<dbReference type="ProteomicsDB" id="275473"/>
<dbReference type="ProteomicsDB" id="330844"/>
<dbReference type="Pumba" id="Q91X78"/>
<dbReference type="Antibodypedia" id="2279">
    <property type="antibodies" value="209 antibodies from 30 providers"/>
</dbReference>
<dbReference type="DNASU" id="226144"/>
<dbReference type="Ensembl" id="ENSMUST00000071698.13">
    <property type="protein sequence ID" value="ENSMUSP00000071618.7"/>
    <property type="gene ID" value="ENSMUSG00000025198.17"/>
</dbReference>
<dbReference type="Ensembl" id="ENSMUST00000112028.10">
    <property type="protein sequence ID" value="ENSMUSP00000107659.4"/>
    <property type="gene ID" value="ENSMUSG00000025198.17"/>
</dbReference>
<dbReference type="Ensembl" id="ENSMUST00000170801.8">
    <property type="protein sequence ID" value="ENSMUSP00000129684.2"/>
    <property type="gene ID" value="ENSMUSG00000025198.17"/>
</dbReference>
<dbReference type="GeneID" id="226144"/>
<dbReference type="KEGG" id="mmu:226144"/>
<dbReference type="UCSC" id="uc008hpd.2">
    <property type="organism name" value="mouse"/>
</dbReference>
<dbReference type="AGR" id="MGI:2387613"/>
<dbReference type="CTD" id="10613"/>
<dbReference type="MGI" id="MGI:2387613">
    <property type="gene designation" value="Erlin1"/>
</dbReference>
<dbReference type="VEuPathDB" id="HostDB:ENSMUSG00000025198"/>
<dbReference type="eggNOG" id="KOG2962">
    <property type="taxonomic scope" value="Eukaryota"/>
</dbReference>
<dbReference type="GeneTree" id="ENSGT00390000014666"/>
<dbReference type="InParanoid" id="Q91X78"/>
<dbReference type="OMA" id="HIMIPIL"/>
<dbReference type="OrthoDB" id="77368at2759"/>
<dbReference type="PhylomeDB" id="Q91X78"/>
<dbReference type="TreeFam" id="TF313059"/>
<dbReference type="Reactome" id="R-MMU-382556">
    <property type="pathway name" value="ABC-family proteins mediated transport"/>
</dbReference>
<dbReference type="BioGRID-ORCS" id="226144">
    <property type="hits" value="3 hits in 80 CRISPR screens"/>
</dbReference>
<dbReference type="CD-CODE" id="CE726F99">
    <property type="entry name" value="Postsynaptic density"/>
</dbReference>
<dbReference type="ChiTaRS" id="Erlin1">
    <property type="organism name" value="mouse"/>
</dbReference>
<dbReference type="PRO" id="PR:Q91X78"/>
<dbReference type="Proteomes" id="UP000000589">
    <property type="component" value="Chromosome 19"/>
</dbReference>
<dbReference type="RNAct" id="Q91X78">
    <property type="molecule type" value="protein"/>
</dbReference>
<dbReference type="Bgee" id="ENSMUSG00000025198">
    <property type="expression patterns" value="Expressed in mucous cell of stomach and 244 other cell types or tissues"/>
</dbReference>
<dbReference type="ExpressionAtlas" id="Q91X78">
    <property type="expression patterns" value="baseline and differential"/>
</dbReference>
<dbReference type="GO" id="GO:0005789">
    <property type="term" value="C:endoplasmic reticulum membrane"/>
    <property type="evidence" value="ECO:0000250"/>
    <property type="project" value="UniProtKB"/>
</dbReference>
<dbReference type="GO" id="GO:0032991">
    <property type="term" value="C:protein-containing complex"/>
    <property type="evidence" value="ECO:0000266"/>
    <property type="project" value="MGI"/>
</dbReference>
<dbReference type="GO" id="GO:0015485">
    <property type="term" value="F:cholesterol binding"/>
    <property type="evidence" value="ECO:0007669"/>
    <property type="project" value="Ensembl"/>
</dbReference>
<dbReference type="GO" id="GO:0031625">
    <property type="term" value="F:ubiquitin protein ligase binding"/>
    <property type="evidence" value="ECO:0007669"/>
    <property type="project" value="InterPro"/>
</dbReference>
<dbReference type="GO" id="GO:0008203">
    <property type="term" value="P:cholesterol metabolic process"/>
    <property type="evidence" value="ECO:0007669"/>
    <property type="project" value="UniProtKB-KW"/>
</dbReference>
<dbReference type="GO" id="GO:0036503">
    <property type="term" value="P:ERAD pathway"/>
    <property type="evidence" value="ECO:0007669"/>
    <property type="project" value="Ensembl"/>
</dbReference>
<dbReference type="GO" id="GO:0045541">
    <property type="term" value="P:negative regulation of cholesterol biosynthetic process"/>
    <property type="evidence" value="ECO:0007669"/>
    <property type="project" value="Ensembl"/>
</dbReference>
<dbReference type="GO" id="GO:0045717">
    <property type="term" value="P:negative regulation of fatty acid biosynthetic process"/>
    <property type="evidence" value="ECO:0007669"/>
    <property type="project" value="Ensembl"/>
</dbReference>
<dbReference type="GO" id="GO:0032933">
    <property type="term" value="P:SREBP signaling pathway"/>
    <property type="evidence" value="ECO:0007669"/>
    <property type="project" value="Ensembl"/>
</dbReference>
<dbReference type="CDD" id="cd03406">
    <property type="entry name" value="SPFH_like_u3"/>
    <property type="match status" value="1"/>
</dbReference>
<dbReference type="FunFam" id="3.30.479.30:FF:000009">
    <property type="entry name" value="Erlin-2 isoform 1"/>
    <property type="match status" value="1"/>
</dbReference>
<dbReference type="Gene3D" id="3.30.479.30">
    <property type="entry name" value="Band 7 domain"/>
    <property type="match status" value="1"/>
</dbReference>
<dbReference type="InterPro" id="IPR001107">
    <property type="entry name" value="Band_7"/>
</dbReference>
<dbReference type="InterPro" id="IPR036013">
    <property type="entry name" value="Band_7/SPFH_dom_sf"/>
</dbReference>
<dbReference type="InterPro" id="IPR033294">
    <property type="entry name" value="Erlin1/2"/>
</dbReference>
<dbReference type="PANTHER" id="PTHR15351">
    <property type="entry name" value="ERLIN (ER LIPID RAFT ASSOCIATED PROTEIN) HOMOLOG"/>
    <property type="match status" value="1"/>
</dbReference>
<dbReference type="PANTHER" id="PTHR15351:SF2">
    <property type="entry name" value="ERLIN-1"/>
    <property type="match status" value="1"/>
</dbReference>
<dbReference type="Pfam" id="PF01145">
    <property type="entry name" value="Band_7"/>
    <property type="match status" value="1"/>
</dbReference>
<dbReference type="SMART" id="SM00244">
    <property type="entry name" value="PHB"/>
    <property type="match status" value="1"/>
</dbReference>
<dbReference type="SUPFAM" id="SSF117892">
    <property type="entry name" value="Band 7/SPFH domain"/>
    <property type="match status" value="1"/>
</dbReference>
<keyword id="KW-0007">Acetylation</keyword>
<keyword id="KW-0153">Cholesterol metabolism</keyword>
<keyword id="KW-0256">Endoplasmic reticulum</keyword>
<keyword id="KW-0325">Glycoprotein</keyword>
<keyword id="KW-0443">Lipid metabolism</keyword>
<keyword id="KW-0446">Lipid-binding</keyword>
<keyword id="KW-0472">Membrane</keyword>
<keyword id="KW-1185">Reference proteome</keyword>
<keyword id="KW-0735">Signal-anchor</keyword>
<keyword id="KW-0753">Steroid metabolism</keyword>
<keyword id="KW-1207">Sterol metabolism</keyword>
<keyword id="KW-0812">Transmembrane</keyword>
<keyword id="KW-1133">Transmembrane helix</keyword>
<name>ERLN1_MOUSE</name>
<evidence type="ECO:0000250" key="1"/>
<evidence type="ECO:0000250" key="2">
    <source>
        <dbReference type="UniProtKB" id="O75477"/>
    </source>
</evidence>
<evidence type="ECO:0000255" key="3"/>
<evidence type="ECO:0000256" key="4">
    <source>
        <dbReference type="SAM" id="MobiDB-lite"/>
    </source>
</evidence>
<evidence type="ECO:0000269" key="5">
    <source>
    </source>
</evidence>
<evidence type="ECO:0000305" key="6"/>
<evidence type="ECO:0000312" key="7">
    <source>
        <dbReference type="MGI" id="MGI:2387613"/>
    </source>
</evidence>